<comment type="function">
    <text evidence="3">Plays a role in the cell cycle. Involved in a late stage of septum formation leading to the separation of the daughter cells.</text>
</comment>
<comment type="subunit">
    <text evidence="3">Component of the septin complex composed of two copies of each spn1, spn2, spn3 and spn4.</text>
</comment>
<comment type="subcellular location">
    <subcellularLocation>
        <location evidence="3">Cytoplasm</location>
        <location evidence="3">Cell cortex</location>
    </subcellularLocation>
    <text>Localizes to the medial ring at the cell cortex of dividing cells.</text>
</comment>
<comment type="similarity">
    <text evidence="2">Belongs to the TRAFAC class TrmE-Era-EngA-EngB-Septin-like GTPase superfamily. Septin GTPase family.</text>
</comment>
<proteinExistence type="evidence at protein level"/>
<name>SPN4_SCHPO</name>
<accession>P48009</accession>
<feature type="chain" id="PRO_0000173506" description="Septin homolog spn4">
    <location>
        <begin position="1"/>
        <end position="380"/>
    </location>
</feature>
<feature type="domain" description="Septin-type G" evidence="2">
    <location>
        <begin position="25"/>
        <end position="298"/>
    </location>
</feature>
<feature type="region of interest" description="G1 motif" evidence="2">
    <location>
        <begin position="35"/>
        <end position="42"/>
    </location>
</feature>
<feature type="region of interest" description="G3 motif" evidence="2">
    <location>
        <begin position="93"/>
        <end position="96"/>
    </location>
</feature>
<feature type="region of interest" description="G4 motif" evidence="2">
    <location>
        <begin position="174"/>
        <end position="177"/>
    </location>
</feature>
<feature type="binding site" evidence="1">
    <location>
        <begin position="35"/>
        <end position="42"/>
    </location>
    <ligand>
        <name>GTP</name>
        <dbReference type="ChEBI" id="CHEBI:37565"/>
    </ligand>
</feature>
<feature type="binding site" evidence="1">
    <location>
        <position position="70"/>
    </location>
    <ligand>
        <name>GTP</name>
        <dbReference type="ChEBI" id="CHEBI:37565"/>
    </ligand>
</feature>
<feature type="binding site" evidence="1">
    <location>
        <position position="96"/>
    </location>
    <ligand>
        <name>GTP</name>
        <dbReference type="ChEBI" id="CHEBI:37565"/>
    </ligand>
</feature>
<feature type="binding site" evidence="1">
    <location>
        <begin position="175"/>
        <end position="183"/>
    </location>
    <ligand>
        <name>GTP</name>
        <dbReference type="ChEBI" id="CHEBI:37565"/>
    </ligand>
</feature>
<feature type="binding site" evidence="1">
    <location>
        <position position="231"/>
    </location>
    <ligand>
        <name>GTP</name>
        <dbReference type="ChEBI" id="CHEBI:37565"/>
    </ligand>
</feature>
<feature type="binding site" evidence="1">
    <location>
        <position position="247"/>
    </location>
    <ligand>
        <name>GTP</name>
        <dbReference type="ChEBI" id="CHEBI:37565"/>
    </ligand>
</feature>
<evidence type="ECO:0000250" key="1"/>
<evidence type="ECO:0000255" key="2">
    <source>
        <dbReference type="PROSITE-ProRule" id="PRU01056"/>
    </source>
</evidence>
<evidence type="ECO:0000269" key="3">
    <source>
    </source>
</evidence>
<keyword id="KW-0131">Cell cycle</keyword>
<keyword id="KW-0132">Cell division</keyword>
<keyword id="KW-0963">Cytoplasm</keyword>
<keyword id="KW-0342">GTP-binding</keyword>
<keyword id="KW-0498">Mitosis</keyword>
<keyword id="KW-0547">Nucleotide-binding</keyword>
<keyword id="KW-1185">Reference proteome</keyword>
<dbReference type="EMBL" id="U29890">
    <property type="protein sequence ID" value="AAB53689.1"/>
    <property type="molecule type" value="mRNA"/>
</dbReference>
<dbReference type="EMBL" id="CU329670">
    <property type="protein sequence ID" value="CAB11495.1"/>
    <property type="molecule type" value="Genomic_DNA"/>
</dbReference>
<dbReference type="PIR" id="T39234">
    <property type="entry name" value="T39234"/>
</dbReference>
<dbReference type="RefSeq" id="NP_593566.1">
    <property type="nucleotide sequence ID" value="NM_001018999.2"/>
</dbReference>
<dbReference type="SMR" id="P48009"/>
<dbReference type="BioGRID" id="278668">
    <property type="interactions" value="31"/>
</dbReference>
<dbReference type="FunCoup" id="P48009">
    <property type="interactions" value="31"/>
</dbReference>
<dbReference type="STRING" id="284812.P48009"/>
<dbReference type="iPTMnet" id="P48009"/>
<dbReference type="PaxDb" id="4896-SPAC9G1.11c.1"/>
<dbReference type="EnsemblFungi" id="SPAC9G1.11c.1">
    <property type="protein sequence ID" value="SPAC9G1.11c.1:pep"/>
    <property type="gene ID" value="SPAC9G1.11c"/>
</dbReference>
<dbReference type="PomBase" id="SPAC9G1.11c">
    <property type="gene designation" value="spn4"/>
</dbReference>
<dbReference type="VEuPathDB" id="FungiDB:SPAC9G1.11c"/>
<dbReference type="eggNOG" id="KOG2655">
    <property type="taxonomic scope" value="Eukaryota"/>
</dbReference>
<dbReference type="HOGENOM" id="CLU_017718_0_0_1"/>
<dbReference type="InParanoid" id="P48009"/>
<dbReference type="OMA" id="IENKEHC"/>
<dbReference type="PhylomeDB" id="P48009"/>
<dbReference type="Reactome" id="R-SPO-111457">
    <property type="pathway name" value="Release of apoptotic factors from the mitochondria"/>
</dbReference>
<dbReference type="Reactome" id="R-SPO-111469">
    <property type="pathway name" value="SMAC, XIAP-regulated apoptotic response"/>
</dbReference>
<dbReference type="PRO" id="PR:P48009"/>
<dbReference type="Proteomes" id="UP000002485">
    <property type="component" value="Chromosome I"/>
</dbReference>
<dbReference type="GO" id="GO:0032153">
    <property type="term" value="C:cell division site"/>
    <property type="evidence" value="ECO:0007005"/>
    <property type="project" value="PomBase"/>
</dbReference>
<dbReference type="GO" id="GO:0005829">
    <property type="term" value="C:cytosol"/>
    <property type="evidence" value="ECO:0007005"/>
    <property type="project" value="PomBase"/>
</dbReference>
<dbReference type="GO" id="GO:0036391">
    <property type="term" value="C:medial cortex septin ring"/>
    <property type="evidence" value="ECO:0000314"/>
    <property type="project" value="PomBase"/>
</dbReference>
<dbReference type="GO" id="GO:0015630">
    <property type="term" value="C:microtubule cytoskeleton"/>
    <property type="evidence" value="ECO:0000318"/>
    <property type="project" value="GO_Central"/>
</dbReference>
<dbReference type="GO" id="GO:0120104">
    <property type="term" value="C:mitotic actomyosin contractile ring, proximal layer"/>
    <property type="evidence" value="ECO:0000314"/>
    <property type="project" value="PomBase"/>
</dbReference>
<dbReference type="GO" id="GO:0032151">
    <property type="term" value="C:mitotic septin complex"/>
    <property type="evidence" value="ECO:0000314"/>
    <property type="project" value="PomBase"/>
</dbReference>
<dbReference type="GO" id="GO:0031105">
    <property type="term" value="C:septin complex"/>
    <property type="evidence" value="ECO:0000318"/>
    <property type="project" value="GO_Central"/>
</dbReference>
<dbReference type="GO" id="GO:0005940">
    <property type="term" value="C:septin ring"/>
    <property type="evidence" value="ECO:0000314"/>
    <property type="project" value="PomBase"/>
</dbReference>
<dbReference type="GO" id="GO:0032176">
    <property type="term" value="C:split septin rings"/>
    <property type="evidence" value="ECO:0000314"/>
    <property type="project" value="PomBase"/>
</dbReference>
<dbReference type="GO" id="GO:0005525">
    <property type="term" value="F:GTP binding"/>
    <property type="evidence" value="ECO:0000255"/>
    <property type="project" value="PomBase"/>
</dbReference>
<dbReference type="GO" id="GO:0003924">
    <property type="term" value="F:GTPase activity"/>
    <property type="evidence" value="ECO:0000318"/>
    <property type="project" value="GO_Central"/>
</dbReference>
<dbReference type="GO" id="GO:0060090">
    <property type="term" value="F:molecular adaptor activity"/>
    <property type="evidence" value="ECO:0000318"/>
    <property type="project" value="GO_Central"/>
</dbReference>
<dbReference type="GO" id="GO:0061640">
    <property type="term" value="P:cytoskeleton-dependent cytokinesis"/>
    <property type="evidence" value="ECO:0000318"/>
    <property type="project" value="GO_Central"/>
</dbReference>
<dbReference type="GO" id="GO:0000281">
    <property type="term" value="P:mitotic cytokinesis"/>
    <property type="evidence" value="ECO:0000315"/>
    <property type="project" value="PomBase"/>
</dbReference>
<dbReference type="GO" id="GO:0008104">
    <property type="term" value="P:protein localization"/>
    <property type="evidence" value="ECO:0000318"/>
    <property type="project" value="GO_Central"/>
</dbReference>
<dbReference type="CDD" id="cd01850">
    <property type="entry name" value="CDC_Septin"/>
    <property type="match status" value="1"/>
</dbReference>
<dbReference type="FunFam" id="3.40.50.300:FF:002051">
    <property type="entry name" value="Spr3p"/>
    <property type="match status" value="1"/>
</dbReference>
<dbReference type="Gene3D" id="3.40.50.300">
    <property type="entry name" value="P-loop containing nucleotide triphosphate hydrolases"/>
    <property type="match status" value="1"/>
</dbReference>
<dbReference type="InterPro" id="IPR030379">
    <property type="entry name" value="G_SEPTIN_dom"/>
</dbReference>
<dbReference type="InterPro" id="IPR027417">
    <property type="entry name" value="P-loop_NTPase"/>
</dbReference>
<dbReference type="InterPro" id="IPR016491">
    <property type="entry name" value="Septin"/>
</dbReference>
<dbReference type="PANTHER" id="PTHR18884">
    <property type="entry name" value="SEPTIN"/>
    <property type="match status" value="1"/>
</dbReference>
<dbReference type="Pfam" id="PF00735">
    <property type="entry name" value="Septin"/>
    <property type="match status" value="1"/>
</dbReference>
<dbReference type="PIRSF" id="PIRSF006698">
    <property type="entry name" value="Septin"/>
    <property type="match status" value="1"/>
</dbReference>
<dbReference type="SUPFAM" id="SSF52540">
    <property type="entry name" value="P-loop containing nucleoside triphosphate hydrolases"/>
    <property type="match status" value="1"/>
</dbReference>
<dbReference type="PROSITE" id="PS51719">
    <property type="entry name" value="G_SEPTIN"/>
    <property type="match status" value="1"/>
</dbReference>
<protein>
    <recommendedName>
        <fullName>Septin homolog spn4</fullName>
    </recommendedName>
</protein>
<reference key="1">
    <citation type="submission" date="1995-06" db="EMBL/GenBank/DDBJ databases">
        <authorList>
            <person name="Al-Awar O.S."/>
            <person name="Pugh T.A."/>
            <person name="Kim H.B."/>
            <person name="Valencik M.L."/>
            <person name="Pringle J.R."/>
        </authorList>
    </citation>
    <scope>NUCLEOTIDE SEQUENCE [MRNA]</scope>
</reference>
<reference key="2">
    <citation type="journal article" date="2002" name="Nature">
        <title>The genome sequence of Schizosaccharomyces pombe.</title>
        <authorList>
            <person name="Wood V."/>
            <person name="Gwilliam R."/>
            <person name="Rajandream M.A."/>
            <person name="Lyne M.H."/>
            <person name="Lyne R."/>
            <person name="Stewart A."/>
            <person name="Sgouros J.G."/>
            <person name="Peat N."/>
            <person name="Hayles J."/>
            <person name="Baker S.G."/>
            <person name="Basham D."/>
            <person name="Bowman S."/>
            <person name="Brooks K."/>
            <person name="Brown D."/>
            <person name="Brown S."/>
            <person name="Chillingworth T."/>
            <person name="Churcher C.M."/>
            <person name="Collins M."/>
            <person name="Connor R."/>
            <person name="Cronin A."/>
            <person name="Davis P."/>
            <person name="Feltwell T."/>
            <person name="Fraser A."/>
            <person name="Gentles S."/>
            <person name="Goble A."/>
            <person name="Hamlin N."/>
            <person name="Harris D.E."/>
            <person name="Hidalgo J."/>
            <person name="Hodgson G."/>
            <person name="Holroyd S."/>
            <person name="Hornsby T."/>
            <person name="Howarth S."/>
            <person name="Huckle E.J."/>
            <person name="Hunt S."/>
            <person name="Jagels K."/>
            <person name="James K.D."/>
            <person name="Jones L."/>
            <person name="Jones M."/>
            <person name="Leather S."/>
            <person name="McDonald S."/>
            <person name="McLean J."/>
            <person name="Mooney P."/>
            <person name="Moule S."/>
            <person name="Mungall K.L."/>
            <person name="Murphy L.D."/>
            <person name="Niblett D."/>
            <person name="Odell C."/>
            <person name="Oliver K."/>
            <person name="O'Neil S."/>
            <person name="Pearson D."/>
            <person name="Quail M.A."/>
            <person name="Rabbinowitsch E."/>
            <person name="Rutherford K.M."/>
            <person name="Rutter S."/>
            <person name="Saunders D."/>
            <person name="Seeger K."/>
            <person name="Sharp S."/>
            <person name="Skelton J."/>
            <person name="Simmonds M.N."/>
            <person name="Squares R."/>
            <person name="Squares S."/>
            <person name="Stevens K."/>
            <person name="Taylor K."/>
            <person name="Taylor R.G."/>
            <person name="Tivey A."/>
            <person name="Walsh S.V."/>
            <person name="Warren T."/>
            <person name="Whitehead S."/>
            <person name="Woodward J.R."/>
            <person name="Volckaert G."/>
            <person name="Aert R."/>
            <person name="Robben J."/>
            <person name="Grymonprez B."/>
            <person name="Weltjens I."/>
            <person name="Vanstreels E."/>
            <person name="Rieger M."/>
            <person name="Schaefer M."/>
            <person name="Mueller-Auer S."/>
            <person name="Gabel C."/>
            <person name="Fuchs M."/>
            <person name="Duesterhoeft A."/>
            <person name="Fritzc C."/>
            <person name="Holzer E."/>
            <person name="Moestl D."/>
            <person name="Hilbert H."/>
            <person name="Borzym K."/>
            <person name="Langer I."/>
            <person name="Beck A."/>
            <person name="Lehrach H."/>
            <person name="Reinhardt R."/>
            <person name="Pohl T.M."/>
            <person name="Eger P."/>
            <person name="Zimmermann W."/>
            <person name="Wedler H."/>
            <person name="Wambutt R."/>
            <person name="Purnelle B."/>
            <person name="Goffeau A."/>
            <person name="Cadieu E."/>
            <person name="Dreano S."/>
            <person name="Gloux S."/>
            <person name="Lelaure V."/>
            <person name="Mottier S."/>
            <person name="Galibert F."/>
            <person name="Aves S.J."/>
            <person name="Xiang Z."/>
            <person name="Hunt C."/>
            <person name="Moore K."/>
            <person name="Hurst S.M."/>
            <person name="Lucas M."/>
            <person name="Rochet M."/>
            <person name="Gaillardin C."/>
            <person name="Tallada V.A."/>
            <person name="Garzon A."/>
            <person name="Thode G."/>
            <person name="Daga R.R."/>
            <person name="Cruzado L."/>
            <person name="Jimenez J."/>
            <person name="Sanchez M."/>
            <person name="del Rey F."/>
            <person name="Benito J."/>
            <person name="Dominguez A."/>
            <person name="Revuelta J.L."/>
            <person name="Moreno S."/>
            <person name="Armstrong J."/>
            <person name="Forsburg S.L."/>
            <person name="Cerutti L."/>
            <person name="Lowe T."/>
            <person name="McCombie W.R."/>
            <person name="Paulsen I."/>
            <person name="Potashkin J."/>
            <person name="Shpakovski G.V."/>
            <person name="Ussery D."/>
            <person name="Barrell B.G."/>
            <person name="Nurse P."/>
        </authorList>
    </citation>
    <scope>NUCLEOTIDE SEQUENCE [LARGE SCALE GENOMIC DNA]</scope>
    <source>
        <strain>972 / ATCC 24843</strain>
    </source>
</reference>
<reference key="3">
    <citation type="journal article" date="2004" name="Mol. Biol. Cell">
        <title>Requirements of fission yeast septins for complex formation, localization, and function.</title>
        <authorList>
            <person name="An H."/>
            <person name="Morrell J.L."/>
            <person name="Jennings J.L."/>
            <person name="Link A.J."/>
            <person name="Gould K.L."/>
        </authorList>
    </citation>
    <scope>FUNCTION</scope>
    <scope>SUBCELLULAR LOCATION</scope>
    <scope>IDENTIFICATION IN THE SEPTIN COMPLEX</scope>
    <scope>IDENTIFICATION BY MASS SPECTROMETRY</scope>
</reference>
<sequence length="380" mass="44773">MNEEETNFVGIADLPNQRHKIVSRNGVAFTLMLCGESGLGKTTFCNTLFSTTIKSHMGPEKVRAKHAEKTVEIEITKAELEEKNFHLRLTVIDTPGFGDFINNSGCWESVVEFIEDQHESYMRQDQQPDRRKIIDMRIHACLYFLRPVRNGVRPMDLEAMKHISKRVNLIPVIAKADMYTRRDLALYKTRISQVLEYHQVNVYKPNMDEGDPVFHRQIQGIINCMPFAIVGSEDDIRTPDGRVVKGREYPWGIVEIENEEHCDFKQLRNILIRSCMLDLIQTTEEKLYEQYRQEQMKVRQYGEPKLRTIDNAKFKEEEENLRKRFTEQVRVEETRFRQWEQRLIAERDSLNKDLEAQHVQIKQIELEIERLKAATSSRKR</sequence>
<organism>
    <name type="scientific">Schizosaccharomyces pombe (strain 972 / ATCC 24843)</name>
    <name type="common">Fission yeast</name>
    <dbReference type="NCBI Taxonomy" id="284812"/>
    <lineage>
        <taxon>Eukaryota</taxon>
        <taxon>Fungi</taxon>
        <taxon>Dikarya</taxon>
        <taxon>Ascomycota</taxon>
        <taxon>Taphrinomycotina</taxon>
        <taxon>Schizosaccharomycetes</taxon>
        <taxon>Schizosaccharomycetales</taxon>
        <taxon>Schizosaccharomycetaceae</taxon>
        <taxon>Schizosaccharomyces</taxon>
    </lineage>
</organism>
<gene>
    <name type="primary">spn4</name>
    <name type="ORF">SPAC9G1.11c</name>
</gene>